<proteinExistence type="inferred from homology"/>
<feature type="chain" id="PRO_1000002218" description="Acetate kinase">
    <location>
        <begin position="1"/>
        <end position="398"/>
    </location>
</feature>
<feature type="active site" description="Proton donor/acceptor" evidence="1">
    <location>
        <position position="148"/>
    </location>
</feature>
<feature type="binding site" evidence="1">
    <location>
        <position position="7"/>
    </location>
    <ligand>
        <name>Mg(2+)</name>
        <dbReference type="ChEBI" id="CHEBI:18420"/>
    </ligand>
</feature>
<feature type="binding site" evidence="1">
    <location>
        <position position="14"/>
    </location>
    <ligand>
        <name>ATP</name>
        <dbReference type="ChEBI" id="CHEBI:30616"/>
    </ligand>
</feature>
<feature type="binding site" evidence="1">
    <location>
        <position position="91"/>
    </location>
    <ligand>
        <name>substrate</name>
    </ligand>
</feature>
<feature type="binding site" evidence="1">
    <location>
        <begin position="208"/>
        <end position="212"/>
    </location>
    <ligand>
        <name>ATP</name>
        <dbReference type="ChEBI" id="CHEBI:30616"/>
    </ligand>
</feature>
<feature type="binding site" evidence="1">
    <location>
        <begin position="282"/>
        <end position="284"/>
    </location>
    <ligand>
        <name>ATP</name>
        <dbReference type="ChEBI" id="CHEBI:30616"/>
    </ligand>
</feature>
<feature type="binding site" evidence="1">
    <location>
        <begin position="330"/>
        <end position="334"/>
    </location>
    <ligand>
        <name>ATP</name>
        <dbReference type="ChEBI" id="CHEBI:30616"/>
    </ligand>
</feature>
<feature type="binding site" evidence="1">
    <location>
        <position position="383"/>
    </location>
    <ligand>
        <name>Mg(2+)</name>
        <dbReference type="ChEBI" id="CHEBI:18420"/>
    </ligand>
</feature>
<feature type="site" description="Transition state stabilizer" evidence="1">
    <location>
        <position position="180"/>
    </location>
</feature>
<feature type="site" description="Transition state stabilizer" evidence="1">
    <location>
        <position position="241"/>
    </location>
</feature>
<protein>
    <recommendedName>
        <fullName evidence="1">Acetate kinase</fullName>
        <ecNumber evidence="1">2.7.2.1</ecNumber>
    </recommendedName>
    <alternativeName>
        <fullName evidence="1">Acetokinase</fullName>
    </alternativeName>
</protein>
<dbReference type="EC" id="2.7.2.1" evidence="1"/>
<dbReference type="EMBL" id="CP000141">
    <property type="protein sequence ID" value="ABB13901.1"/>
    <property type="molecule type" value="Genomic_DNA"/>
</dbReference>
<dbReference type="RefSeq" id="WP_011344362.1">
    <property type="nucleotide sequence ID" value="NC_007503.1"/>
</dbReference>
<dbReference type="SMR" id="Q3AC47"/>
<dbReference type="FunCoup" id="Q3AC47">
    <property type="interactions" value="329"/>
</dbReference>
<dbReference type="STRING" id="246194.CHY_1455"/>
<dbReference type="KEGG" id="chy:CHY_1455"/>
<dbReference type="eggNOG" id="COG0282">
    <property type="taxonomic scope" value="Bacteria"/>
</dbReference>
<dbReference type="HOGENOM" id="CLU_020352_0_1_9"/>
<dbReference type="InParanoid" id="Q3AC47"/>
<dbReference type="OrthoDB" id="9802453at2"/>
<dbReference type="UniPathway" id="UPA00340">
    <property type="reaction ID" value="UER00458"/>
</dbReference>
<dbReference type="Proteomes" id="UP000002706">
    <property type="component" value="Chromosome"/>
</dbReference>
<dbReference type="GO" id="GO:0005737">
    <property type="term" value="C:cytoplasm"/>
    <property type="evidence" value="ECO:0007669"/>
    <property type="project" value="UniProtKB-SubCell"/>
</dbReference>
<dbReference type="GO" id="GO:0008776">
    <property type="term" value="F:acetate kinase activity"/>
    <property type="evidence" value="ECO:0007669"/>
    <property type="project" value="UniProtKB-UniRule"/>
</dbReference>
<dbReference type="GO" id="GO:0005524">
    <property type="term" value="F:ATP binding"/>
    <property type="evidence" value="ECO:0007669"/>
    <property type="project" value="UniProtKB-KW"/>
</dbReference>
<dbReference type="GO" id="GO:0000287">
    <property type="term" value="F:magnesium ion binding"/>
    <property type="evidence" value="ECO:0007669"/>
    <property type="project" value="UniProtKB-UniRule"/>
</dbReference>
<dbReference type="GO" id="GO:0006083">
    <property type="term" value="P:acetate metabolic process"/>
    <property type="evidence" value="ECO:0007669"/>
    <property type="project" value="TreeGrafter"/>
</dbReference>
<dbReference type="GO" id="GO:0006085">
    <property type="term" value="P:acetyl-CoA biosynthetic process"/>
    <property type="evidence" value="ECO:0007669"/>
    <property type="project" value="UniProtKB-UniRule"/>
</dbReference>
<dbReference type="CDD" id="cd24010">
    <property type="entry name" value="ASKHA_NBD_AcK_PK"/>
    <property type="match status" value="1"/>
</dbReference>
<dbReference type="Gene3D" id="3.30.420.40">
    <property type="match status" value="2"/>
</dbReference>
<dbReference type="HAMAP" id="MF_00020">
    <property type="entry name" value="Acetate_kinase"/>
    <property type="match status" value="1"/>
</dbReference>
<dbReference type="InterPro" id="IPR004372">
    <property type="entry name" value="Ac/propionate_kinase"/>
</dbReference>
<dbReference type="InterPro" id="IPR000890">
    <property type="entry name" value="Aliphatic_acid_kin_short-chain"/>
</dbReference>
<dbReference type="InterPro" id="IPR023865">
    <property type="entry name" value="Aliphatic_acid_kinase_CS"/>
</dbReference>
<dbReference type="InterPro" id="IPR043129">
    <property type="entry name" value="ATPase_NBD"/>
</dbReference>
<dbReference type="NCBIfam" id="TIGR00016">
    <property type="entry name" value="ackA"/>
    <property type="match status" value="1"/>
</dbReference>
<dbReference type="PANTHER" id="PTHR21060">
    <property type="entry name" value="ACETATE KINASE"/>
    <property type="match status" value="1"/>
</dbReference>
<dbReference type="PANTHER" id="PTHR21060:SF15">
    <property type="entry name" value="ACETATE KINASE-RELATED"/>
    <property type="match status" value="1"/>
</dbReference>
<dbReference type="Pfam" id="PF00871">
    <property type="entry name" value="Acetate_kinase"/>
    <property type="match status" value="1"/>
</dbReference>
<dbReference type="PIRSF" id="PIRSF000722">
    <property type="entry name" value="Acetate_prop_kin"/>
    <property type="match status" value="1"/>
</dbReference>
<dbReference type="PRINTS" id="PR00471">
    <property type="entry name" value="ACETATEKNASE"/>
</dbReference>
<dbReference type="SUPFAM" id="SSF53067">
    <property type="entry name" value="Actin-like ATPase domain"/>
    <property type="match status" value="2"/>
</dbReference>
<dbReference type="PROSITE" id="PS01075">
    <property type="entry name" value="ACETATE_KINASE_1"/>
    <property type="match status" value="1"/>
</dbReference>
<dbReference type="PROSITE" id="PS01076">
    <property type="entry name" value="ACETATE_KINASE_2"/>
    <property type="match status" value="1"/>
</dbReference>
<keyword id="KW-0067">ATP-binding</keyword>
<keyword id="KW-0963">Cytoplasm</keyword>
<keyword id="KW-0418">Kinase</keyword>
<keyword id="KW-0460">Magnesium</keyword>
<keyword id="KW-0479">Metal-binding</keyword>
<keyword id="KW-0547">Nucleotide-binding</keyword>
<keyword id="KW-1185">Reference proteome</keyword>
<keyword id="KW-0808">Transferase</keyword>
<evidence type="ECO:0000255" key="1">
    <source>
        <dbReference type="HAMAP-Rule" id="MF_00020"/>
    </source>
</evidence>
<gene>
    <name evidence="1" type="primary">ackA</name>
    <name type="ordered locus">CHY_1455</name>
</gene>
<accession>Q3AC47</accession>
<organism>
    <name type="scientific">Carboxydothermus hydrogenoformans (strain ATCC BAA-161 / DSM 6008 / Z-2901)</name>
    <dbReference type="NCBI Taxonomy" id="246194"/>
    <lineage>
        <taxon>Bacteria</taxon>
        <taxon>Bacillati</taxon>
        <taxon>Bacillota</taxon>
        <taxon>Clostridia</taxon>
        <taxon>Thermoanaerobacterales</taxon>
        <taxon>Thermoanaerobacteraceae</taxon>
        <taxon>Carboxydothermus</taxon>
    </lineage>
</organism>
<sequence length="398" mass="43869">MKVLVLNCGSSSLKYQLLDMEKETVLAKGLVERIGLEGSRLIIDLPGREKIKKEQPFVNHEVAINAVLEELVREEYGILRNLEEITAIGHRIVHGGEKFSGSVIINEEILKAVEECVNLAPLHNPPNILGIRACQKLLPNTPQVGVFDTAFHQTMPRKAYLYGVPYYWYEKYGIRRYGFHGTSHKYVAYKASEILGKPLNELKIITCHLGNGSSVAAVKEGKSIDTSMGFTPLEGLLMGTRSGNIDPAIVTFIQEKEGLSAAQVNDILNKKSGVLGISGYSDFRDIEERASAGDDKAKLALEMFCYQVAKYIGAYAAAMNGVDAIVFTAGVGENSDVVRKEVCKYLEFLGATLDEEKNKIRGKEAIISTPDSKVKIMVIPTNEELMIAKETLELVVNK</sequence>
<reference key="1">
    <citation type="journal article" date="2005" name="PLoS Genet.">
        <title>Life in hot carbon monoxide: the complete genome sequence of Carboxydothermus hydrogenoformans Z-2901.</title>
        <authorList>
            <person name="Wu M."/>
            <person name="Ren Q."/>
            <person name="Durkin A.S."/>
            <person name="Daugherty S.C."/>
            <person name="Brinkac L.M."/>
            <person name="Dodson R.J."/>
            <person name="Madupu R."/>
            <person name="Sullivan S.A."/>
            <person name="Kolonay J.F."/>
            <person name="Nelson W.C."/>
            <person name="Tallon L.J."/>
            <person name="Jones K.M."/>
            <person name="Ulrich L.E."/>
            <person name="Gonzalez J.M."/>
            <person name="Zhulin I.B."/>
            <person name="Robb F.T."/>
            <person name="Eisen J.A."/>
        </authorList>
    </citation>
    <scope>NUCLEOTIDE SEQUENCE [LARGE SCALE GENOMIC DNA]</scope>
    <source>
        <strain>ATCC BAA-161 / DSM 6008 / Z-2901</strain>
    </source>
</reference>
<name>ACKA_CARHZ</name>
<comment type="function">
    <text evidence="1">Catalyzes the formation of acetyl phosphate from acetate and ATP. Can also catalyze the reverse reaction.</text>
</comment>
<comment type="catalytic activity">
    <reaction evidence="1">
        <text>acetate + ATP = acetyl phosphate + ADP</text>
        <dbReference type="Rhea" id="RHEA:11352"/>
        <dbReference type="ChEBI" id="CHEBI:22191"/>
        <dbReference type="ChEBI" id="CHEBI:30089"/>
        <dbReference type="ChEBI" id="CHEBI:30616"/>
        <dbReference type="ChEBI" id="CHEBI:456216"/>
        <dbReference type="EC" id="2.7.2.1"/>
    </reaction>
</comment>
<comment type="cofactor">
    <cofactor evidence="1">
        <name>Mg(2+)</name>
        <dbReference type="ChEBI" id="CHEBI:18420"/>
    </cofactor>
    <cofactor evidence="1">
        <name>Mn(2+)</name>
        <dbReference type="ChEBI" id="CHEBI:29035"/>
    </cofactor>
    <text evidence="1">Mg(2+). Can also accept Mn(2+).</text>
</comment>
<comment type="pathway">
    <text evidence="1">Metabolic intermediate biosynthesis; acetyl-CoA biosynthesis; acetyl-CoA from acetate: step 1/2.</text>
</comment>
<comment type="subunit">
    <text evidence="1">Homodimer.</text>
</comment>
<comment type="subcellular location">
    <subcellularLocation>
        <location evidence="1">Cytoplasm</location>
    </subcellularLocation>
</comment>
<comment type="similarity">
    <text evidence="1">Belongs to the acetokinase family.</text>
</comment>